<reference key="1">
    <citation type="submission" date="2007-03" db="EMBL/GenBank/DDBJ databases">
        <title>Complete sequence of Prosthecochloris vibrioformis DSM 265.</title>
        <authorList>
            <consortium name="US DOE Joint Genome Institute"/>
            <person name="Copeland A."/>
            <person name="Lucas S."/>
            <person name="Lapidus A."/>
            <person name="Barry K."/>
            <person name="Detter J.C."/>
            <person name="Glavina del Rio T."/>
            <person name="Hammon N."/>
            <person name="Israni S."/>
            <person name="Pitluck S."/>
            <person name="Schmutz J."/>
            <person name="Larimer F."/>
            <person name="Land M."/>
            <person name="Hauser L."/>
            <person name="Mikhailova N."/>
            <person name="Li T."/>
            <person name="Overmann J."/>
            <person name="Schuster S.C."/>
            <person name="Bryant D.A."/>
            <person name="Richardson P."/>
        </authorList>
    </citation>
    <scope>NUCLEOTIDE SEQUENCE [LARGE SCALE GENOMIC DNA]</scope>
    <source>
        <strain>DSM 265 / 1930</strain>
    </source>
</reference>
<evidence type="ECO:0000255" key="1">
    <source>
        <dbReference type="HAMAP-Rule" id="MF_00163"/>
    </source>
</evidence>
<dbReference type="EC" id="3.5.1.88" evidence="1"/>
<dbReference type="EMBL" id="CP000607">
    <property type="protein sequence ID" value="ABP37301.1"/>
    <property type="molecule type" value="Genomic_DNA"/>
</dbReference>
<dbReference type="SMR" id="A4SFP2"/>
<dbReference type="STRING" id="290318.Cvib_1289"/>
<dbReference type="KEGG" id="pvi:Cvib_1289"/>
<dbReference type="eggNOG" id="COG0242">
    <property type="taxonomic scope" value="Bacteria"/>
</dbReference>
<dbReference type="HOGENOM" id="CLU_061901_2_0_10"/>
<dbReference type="OrthoDB" id="9784988at2"/>
<dbReference type="GO" id="GO:0046872">
    <property type="term" value="F:metal ion binding"/>
    <property type="evidence" value="ECO:0007669"/>
    <property type="project" value="UniProtKB-KW"/>
</dbReference>
<dbReference type="GO" id="GO:0042586">
    <property type="term" value="F:peptide deformylase activity"/>
    <property type="evidence" value="ECO:0007669"/>
    <property type="project" value="UniProtKB-UniRule"/>
</dbReference>
<dbReference type="GO" id="GO:0043686">
    <property type="term" value="P:co-translational protein modification"/>
    <property type="evidence" value="ECO:0007669"/>
    <property type="project" value="TreeGrafter"/>
</dbReference>
<dbReference type="GO" id="GO:0006412">
    <property type="term" value="P:translation"/>
    <property type="evidence" value="ECO:0007669"/>
    <property type="project" value="UniProtKB-UniRule"/>
</dbReference>
<dbReference type="CDD" id="cd00487">
    <property type="entry name" value="Pep_deformylase"/>
    <property type="match status" value="1"/>
</dbReference>
<dbReference type="Gene3D" id="3.90.45.10">
    <property type="entry name" value="Peptide deformylase"/>
    <property type="match status" value="1"/>
</dbReference>
<dbReference type="HAMAP" id="MF_00163">
    <property type="entry name" value="Pep_deformylase"/>
    <property type="match status" value="1"/>
</dbReference>
<dbReference type="InterPro" id="IPR023635">
    <property type="entry name" value="Peptide_deformylase"/>
</dbReference>
<dbReference type="InterPro" id="IPR036821">
    <property type="entry name" value="Peptide_deformylase_sf"/>
</dbReference>
<dbReference type="NCBIfam" id="TIGR00079">
    <property type="entry name" value="pept_deformyl"/>
    <property type="match status" value="1"/>
</dbReference>
<dbReference type="NCBIfam" id="NF001159">
    <property type="entry name" value="PRK00150.1-3"/>
    <property type="match status" value="1"/>
</dbReference>
<dbReference type="PANTHER" id="PTHR10458">
    <property type="entry name" value="PEPTIDE DEFORMYLASE"/>
    <property type="match status" value="1"/>
</dbReference>
<dbReference type="PANTHER" id="PTHR10458:SF22">
    <property type="entry name" value="PEPTIDE DEFORMYLASE"/>
    <property type="match status" value="1"/>
</dbReference>
<dbReference type="Pfam" id="PF01327">
    <property type="entry name" value="Pep_deformylase"/>
    <property type="match status" value="1"/>
</dbReference>
<dbReference type="PIRSF" id="PIRSF004749">
    <property type="entry name" value="Pep_def"/>
    <property type="match status" value="1"/>
</dbReference>
<dbReference type="PRINTS" id="PR01576">
    <property type="entry name" value="PDEFORMYLASE"/>
</dbReference>
<dbReference type="SUPFAM" id="SSF56420">
    <property type="entry name" value="Peptide deformylase"/>
    <property type="match status" value="1"/>
</dbReference>
<organism>
    <name type="scientific">Chlorobium phaeovibrioides (strain DSM 265 / 1930)</name>
    <name type="common">Prosthecochloris vibrioformis (strain DSM 265)</name>
    <dbReference type="NCBI Taxonomy" id="290318"/>
    <lineage>
        <taxon>Bacteria</taxon>
        <taxon>Pseudomonadati</taxon>
        <taxon>Chlorobiota</taxon>
        <taxon>Chlorobiia</taxon>
        <taxon>Chlorobiales</taxon>
        <taxon>Chlorobiaceae</taxon>
        <taxon>Chlorobium/Pelodictyon group</taxon>
        <taxon>Chlorobium</taxon>
    </lineage>
</organism>
<name>DEF_CHLPM</name>
<sequence>MILPITTYTDEVLHQTAKPLKGVDGAVEELIDSMFESMENASGIGLAAPQVGHSLRLLVLDISCMKSYEDVAPMVVINPHILSVKGKNLMEEGCLSVPGVQGDVQRPSSITLKYRDRNFLEQTEEFSGMLARVLQHEIDHLSGTLFIDRMEKRDRRKIQKELDDIAKGNIEVDYPLARACSRDGGGAICM</sequence>
<gene>
    <name evidence="1" type="primary">def</name>
    <name type="ordered locus">Cvib_1289</name>
</gene>
<protein>
    <recommendedName>
        <fullName evidence="1">Peptide deformylase</fullName>
        <shortName evidence="1">PDF</shortName>
        <ecNumber evidence="1">3.5.1.88</ecNumber>
    </recommendedName>
    <alternativeName>
        <fullName evidence="1">Polypeptide deformylase</fullName>
    </alternativeName>
</protein>
<comment type="function">
    <text evidence="1">Removes the formyl group from the N-terminal Met of newly synthesized proteins. Requires at least a dipeptide for an efficient rate of reaction. N-terminal L-methionine is a prerequisite for activity but the enzyme has broad specificity at other positions.</text>
</comment>
<comment type="catalytic activity">
    <reaction evidence="1">
        <text>N-terminal N-formyl-L-methionyl-[peptide] + H2O = N-terminal L-methionyl-[peptide] + formate</text>
        <dbReference type="Rhea" id="RHEA:24420"/>
        <dbReference type="Rhea" id="RHEA-COMP:10639"/>
        <dbReference type="Rhea" id="RHEA-COMP:10640"/>
        <dbReference type="ChEBI" id="CHEBI:15377"/>
        <dbReference type="ChEBI" id="CHEBI:15740"/>
        <dbReference type="ChEBI" id="CHEBI:49298"/>
        <dbReference type="ChEBI" id="CHEBI:64731"/>
        <dbReference type="EC" id="3.5.1.88"/>
    </reaction>
</comment>
<comment type="cofactor">
    <cofactor evidence="1">
        <name>Fe(2+)</name>
        <dbReference type="ChEBI" id="CHEBI:29033"/>
    </cofactor>
    <text evidence="1">Binds 1 Fe(2+) ion.</text>
</comment>
<comment type="similarity">
    <text evidence="1">Belongs to the polypeptide deformylase family.</text>
</comment>
<feature type="chain" id="PRO_1000076949" description="Peptide deformylase">
    <location>
        <begin position="1"/>
        <end position="190"/>
    </location>
</feature>
<feature type="active site" evidence="1">
    <location>
        <position position="137"/>
    </location>
</feature>
<feature type="binding site" evidence="1">
    <location>
        <position position="94"/>
    </location>
    <ligand>
        <name>Fe cation</name>
        <dbReference type="ChEBI" id="CHEBI:24875"/>
    </ligand>
</feature>
<feature type="binding site" evidence="1">
    <location>
        <position position="136"/>
    </location>
    <ligand>
        <name>Fe cation</name>
        <dbReference type="ChEBI" id="CHEBI:24875"/>
    </ligand>
</feature>
<feature type="binding site" evidence="1">
    <location>
        <position position="140"/>
    </location>
    <ligand>
        <name>Fe cation</name>
        <dbReference type="ChEBI" id="CHEBI:24875"/>
    </ligand>
</feature>
<keyword id="KW-0378">Hydrolase</keyword>
<keyword id="KW-0408">Iron</keyword>
<keyword id="KW-0479">Metal-binding</keyword>
<keyword id="KW-0648">Protein biosynthesis</keyword>
<proteinExistence type="inferred from homology"/>
<accession>A4SFP2</accession>